<keyword id="KW-0396">Initiation factor</keyword>
<keyword id="KW-0648">Protein biosynthesis</keyword>
<keyword id="KW-1185">Reference proteome</keyword>
<accession>Q8ZXV9</accession>
<sequence>MARLRIINFYRSAYCSAMSEFRLPGEGEILGKVIEMLGDGRFKVICADGQIRVARLPGRLRRRLWLKAGDYVIVALWDFDREKGDIVHKYEKRDVEELKRRGFAEAIEALDSYA</sequence>
<comment type="function">
    <text evidence="1">Seems to be required for maximal rate of protein biosynthesis. Enhances ribosome dissociation into subunits and stabilizes the binding of the initiator Met-tRNA(I) to 40 S ribosomal subunits (By similarity).</text>
</comment>
<comment type="similarity">
    <text evidence="2">Belongs to the eIF-1A family.</text>
</comment>
<comment type="sequence caution" evidence="2">
    <conflict type="erroneous initiation">
        <sequence resource="EMBL-CDS" id="AAL63237"/>
    </conflict>
</comment>
<proteinExistence type="inferred from homology"/>
<evidence type="ECO:0000250" key="1"/>
<evidence type="ECO:0000305" key="2"/>
<reference key="1">
    <citation type="journal article" date="2002" name="Proc. Natl. Acad. Sci. U.S.A.">
        <title>Genome sequence of the hyperthermophilic crenarchaeon Pyrobaculum aerophilum.</title>
        <authorList>
            <person name="Fitz-Gibbon S.T."/>
            <person name="Ladner H."/>
            <person name="Kim U.-J."/>
            <person name="Stetter K.O."/>
            <person name="Simon M.I."/>
            <person name="Miller J.H."/>
        </authorList>
    </citation>
    <scope>NUCLEOTIDE SEQUENCE [LARGE SCALE GENOMIC DNA]</scope>
    <source>
        <strain>ATCC 51768 / DSM 7523 / JCM 9630 / CIP 104966 / NBRC 100827 / IM2</strain>
    </source>
</reference>
<name>IF1A_PYRAE</name>
<feature type="chain" id="PRO_0000145129" description="Translation initiation factor 1A">
    <location>
        <begin position="1"/>
        <end position="114"/>
    </location>
</feature>
<feature type="domain" description="S1-like">
    <location>
        <begin position="19"/>
        <end position="91"/>
    </location>
</feature>
<organism>
    <name type="scientific">Pyrobaculum aerophilum (strain ATCC 51768 / DSM 7523 / JCM 9630 / CIP 104966 / NBRC 100827 / IM2)</name>
    <dbReference type="NCBI Taxonomy" id="178306"/>
    <lineage>
        <taxon>Archaea</taxon>
        <taxon>Thermoproteota</taxon>
        <taxon>Thermoprotei</taxon>
        <taxon>Thermoproteales</taxon>
        <taxon>Thermoproteaceae</taxon>
        <taxon>Pyrobaculum</taxon>
    </lineage>
</organism>
<gene>
    <name type="primary">eIF1A</name>
    <name type="ordered locus">PAE1072</name>
</gene>
<protein>
    <recommendedName>
        <fullName>Translation initiation factor 1A</fullName>
        <shortName>aIF-1A</shortName>
    </recommendedName>
</protein>
<dbReference type="EMBL" id="AE009441">
    <property type="protein sequence ID" value="AAL63237.1"/>
    <property type="status" value="ALT_INIT"/>
    <property type="molecule type" value="Genomic_DNA"/>
</dbReference>
<dbReference type="SMR" id="Q8ZXV9"/>
<dbReference type="FunCoup" id="Q8ZXV9">
    <property type="interactions" value="177"/>
</dbReference>
<dbReference type="STRING" id="178306.PAE1072"/>
<dbReference type="EnsemblBacteria" id="AAL63237">
    <property type="protein sequence ID" value="AAL63237"/>
    <property type="gene ID" value="PAE1072"/>
</dbReference>
<dbReference type="KEGG" id="pai:PAE1072"/>
<dbReference type="PATRIC" id="fig|178306.9.peg.795"/>
<dbReference type="eggNOG" id="arCOG01179">
    <property type="taxonomic scope" value="Archaea"/>
</dbReference>
<dbReference type="HOGENOM" id="CLU_109098_1_2_2"/>
<dbReference type="InParanoid" id="Q8ZXV9"/>
<dbReference type="Proteomes" id="UP000002439">
    <property type="component" value="Chromosome"/>
</dbReference>
<dbReference type="GO" id="GO:0005737">
    <property type="term" value="C:cytoplasm"/>
    <property type="evidence" value="ECO:0000318"/>
    <property type="project" value="GO_Central"/>
</dbReference>
<dbReference type="GO" id="GO:0003723">
    <property type="term" value="F:RNA binding"/>
    <property type="evidence" value="ECO:0007669"/>
    <property type="project" value="InterPro"/>
</dbReference>
<dbReference type="GO" id="GO:0003743">
    <property type="term" value="F:translation initiation factor activity"/>
    <property type="evidence" value="ECO:0000318"/>
    <property type="project" value="GO_Central"/>
</dbReference>
<dbReference type="GO" id="GO:0006413">
    <property type="term" value="P:translational initiation"/>
    <property type="evidence" value="ECO:0000318"/>
    <property type="project" value="GO_Central"/>
</dbReference>
<dbReference type="CDD" id="cd05793">
    <property type="entry name" value="S1_IF1A"/>
    <property type="match status" value="1"/>
</dbReference>
<dbReference type="Gene3D" id="2.40.50.140">
    <property type="entry name" value="Nucleic acid-binding proteins"/>
    <property type="match status" value="1"/>
</dbReference>
<dbReference type="HAMAP" id="MF_00216">
    <property type="entry name" value="aIF_1A"/>
    <property type="match status" value="1"/>
</dbReference>
<dbReference type="InterPro" id="IPR012340">
    <property type="entry name" value="NA-bd_OB-fold"/>
</dbReference>
<dbReference type="InterPro" id="IPR006196">
    <property type="entry name" value="RNA-binding_domain_S1_IF1"/>
</dbReference>
<dbReference type="InterPro" id="IPR001253">
    <property type="entry name" value="TIF_eIF-1A"/>
</dbReference>
<dbReference type="InterPro" id="IPR018104">
    <property type="entry name" value="TIF_eIF-1A_CS"/>
</dbReference>
<dbReference type="NCBIfam" id="NF003082">
    <property type="entry name" value="PRK04012.1-1"/>
    <property type="match status" value="1"/>
</dbReference>
<dbReference type="NCBIfam" id="NF003084">
    <property type="entry name" value="PRK04012.1-3"/>
    <property type="match status" value="1"/>
</dbReference>
<dbReference type="PANTHER" id="PTHR21668">
    <property type="entry name" value="EIF-1A"/>
    <property type="match status" value="1"/>
</dbReference>
<dbReference type="Pfam" id="PF01176">
    <property type="entry name" value="eIF-1a"/>
    <property type="match status" value="1"/>
</dbReference>
<dbReference type="SMART" id="SM00652">
    <property type="entry name" value="eIF1a"/>
    <property type="match status" value="1"/>
</dbReference>
<dbReference type="SUPFAM" id="SSF50249">
    <property type="entry name" value="Nucleic acid-binding proteins"/>
    <property type="match status" value="1"/>
</dbReference>
<dbReference type="PROSITE" id="PS01262">
    <property type="entry name" value="IF1A"/>
    <property type="match status" value="1"/>
</dbReference>
<dbReference type="PROSITE" id="PS50832">
    <property type="entry name" value="S1_IF1_TYPE"/>
    <property type="match status" value="1"/>
</dbReference>